<name>SYE_SALG2</name>
<reference key="1">
    <citation type="journal article" date="2008" name="Genome Res.">
        <title>Comparative genome analysis of Salmonella enteritidis PT4 and Salmonella gallinarum 287/91 provides insights into evolutionary and host adaptation pathways.</title>
        <authorList>
            <person name="Thomson N.R."/>
            <person name="Clayton D.J."/>
            <person name="Windhorst D."/>
            <person name="Vernikos G."/>
            <person name="Davidson S."/>
            <person name="Churcher C."/>
            <person name="Quail M.A."/>
            <person name="Stevens M."/>
            <person name="Jones M.A."/>
            <person name="Watson M."/>
            <person name="Barron A."/>
            <person name="Layton A."/>
            <person name="Pickard D."/>
            <person name="Kingsley R.A."/>
            <person name="Bignell A."/>
            <person name="Clark L."/>
            <person name="Harris B."/>
            <person name="Ormond D."/>
            <person name="Abdellah Z."/>
            <person name="Brooks K."/>
            <person name="Cherevach I."/>
            <person name="Chillingworth T."/>
            <person name="Woodward J."/>
            <person name="Norberczak H."/>
            <person name="Lord A."/>
            <person name="Arrowsmith C."/>
            <person name="Jagels K."/>
            <person name="Moule S."/>
            <person name="Mungall K."/>
            <person name="Saunders M."/>
            <person name="Whitehead S."/>
            <person name="Chabalgoity J.A."/>
            <person name="Maskell D."/>
            <person name="Humphreys T."/>
            <person name="Roberts M."/>
            <person name="Barrow P.A."/>
            <person name="Dougan G."/>
            <person name="Parkhill J."/>
        </authorList>
    </citation>
    <scope>NUCLEOTIDE SEQUENCE [LARGE SCALE GENOMIC DNA]</scope>
    <source>
        <strain>287/91 / NCTC 13346</strain>
    </source>
</reference>
<dbReference type="EC" id="6.1.1.17" evidence="1"/>
<dbReference type="EMBL" id="AM933173">
    <property type="protein sequence ID" value="CAR38277.1"/>
    <property type="status" value="ALT_INIT"/>
    <property type="molecule type" value="Genomic_DNA"/>
</dbReference>
<dbReference type="RefSeq" id="WP_000695627.1">
    <property type="nucleotide sequence ID" value="NC_011274.1"/>
</dbReference>
<dbReference type="SMR" id="B5RCP1"/>
<dbReference type="KEGG" id="seg:SG2450"/>
<dbReference type="HOGENOM" id="CLU_015768_6_0_6"/>
<dbReference type="Proteomes" id="UP000008321">
    <property type="component" value="Chromosome"/>
</dbReference>
<dbReference type="GO" id="GO:0005829">
    <property type="term" value="C:cytosol"/>
    <property type="evidence" value="ECO:0007669"/>
    <property type="project" value="TreeGrafter"/>
</dbReference>
<dbReference type="GO" id="GO:0005524">
    <property type="term" value="F:ATP binding"/>
    <property type="evidence" value="ECO:0007669"/>
    <property type="project" value="UniProtKB-UniRule"/>
</dbReference>
<dbReference type="GO" id="GO:0004818">
    <property type="term" value="F:glutamate-tRNA ligase activity"/>
    <property type="evidence" value="ECO:0007669"/>
    <property type="project" value="UniProtKB-UniRule"/>
</dbReference>
<dbReference type="GO" id="GO:0000049">
    <property type="term" value="F:tRNA binding"/>
    <property type="evidence" value="ECO:0007669"/>
    <property type="project" value="InterPro"/>
</dbReference>
<dbReference type="GO" id="GO:0008270">
    <property type="term" value="F:zinc ion binding"/>
    <property type="evidence" value="ECO:0007669"/>
    <property type="project" value="UniProtKB-UniRule"/>
</dbReference>
<dbReference type="GO" id="GO:0006424">
    <property type="term" value="P:glutamyl-tRNA aminoacylation"/>
    <property type="evidence" value="ECO:0007669"/>
    <property type="project" value="UniProtKB-UniRule"/>
</dbReference>
<dbReference type="CDD" id="cd00808">
    <property type="entry name" value="GluRS_core"/>
    <property type="match status" value="1"/>
</dbReference>
<dbReference type="FunFam" id="1.10.10.350:FF:000001">
    <property type="entry name" value="Glutamate--tRNA ligase"/>
    <property type="match status" value="1"/>
</dbReference>
<dbReference type="FunFam" id="3.40.50.620:FF:000007">
    <property type="entry name" value="Glutamate--tRNA ligase"/>
    <property type="match status" value="1"/>
</dbReference>
<dbReference type="Gene3D" id="1.10.10.350">
    <property type="match status" value="1"/>
</dbReference>
<dbReference type="Gene3D" id="3.40.50.620">
    <property type="entry name" value="HUPs"/>
    <property type="match status" value="1"/>
</dbReference>
<dbReference type="HAMAP" id="MF_00022">
    <property type="entry name" value="Glu_tRNA_synth_type1"/>
    <property type="match status" value="1"/>
</dbReference>
<dbReference type="InterPro" id="IPR045462">
    <property type="entry name" value="aa-tRNA-synth_I_cd-bd"/>
</dbReference>
<dbReference type="InterPro" id="IPR020751">
    <property type="entry name" value="aa-tRNA-synth_I_codon-bd_sub2"/>
</dbReference>
<dbReference type="InterPro" id="IPR001412">
    <property type="entry name" value="aa-tRNA-synth_I_CS"/>
</dbReference>
<dbReference type="InterPro" id="IPR008925">
    <property type="entry name" value="aa_tRNA-synth_I_cd-bd_sf"/>
</dbReference>
<dbReference type="InterPro" id="IPR004527">
    <property type="entry name" value="Glu-tRNA-ligase_bac/mito"/>
</dbReference>
<dbReference type="InterPro" id="IPR000924">
    <property type="entry name" value="Glu/Gln-tRNA-synth"/>
</dbReference>
<dbReference type="InterPro" id="IPR020058">
    <property type="entry name" value="Glu/Gln-tRNA-synth_Ib_cat-dom"/>
</dbReference>
<dbReference type="InterPro" id="IPR049940">
    <property type="entry name" value="GluQ/Sye"/>
</dbReference>
<dbReference type="InterPro" id="IPR033910">
    <property type="entry name" value="GluRS_core"/>
</dbReference>
<dbReference type="InterPro" id="IPR014729">
    <property type="entry name" value="Rossmann-like_a/b/a_fold"/>
</dbReference>
<dbReference type="NCBIfam" id="TIGR00464">
    <property type="entry name" value="gltX_bact"/>
    <property type="match status" value="1"/>
</dbReference>
<dbReference type="PANTHER" id="PTHR43311">
    <property type="entry name" value="GLUTAMATE--TRNA LIGASE"/>
    <property type="match status" value="1"/>
</dbReference>
<dbReference type="PANTHER" id="PTHR43311:SF2">
    <property type="entry name" value="GLUTAMATE--TRNA LIGASE, MITOCHONDRIAL-RELATED"/>
    <property type="match status" value="1"/>
</dbReference>
<dbReference type="Pfam" id="PF19269">
    <property type="entry name" value="Anticodon_2"/>
    <property type="match status" value="1"/>
</dbReference>
<dbReference type="Pfam" id="PF00749">
    <property type="entry name" value="tRNA-synt_1c"/>
    <property type="match status" value="1"/>
</dbReference>
<dbReference type="PRINTS" id="PR00987">
    <property type="entry name" value="TRNASYNTHGLU"/>
</dbReference>
<dbReference type="SUPFAM" id="SSF48163">
    <property type="entry name" value="An anticodon-binding domain of class I aminoacyl-tRNA synthetases"/>
    <property type="match status" value="1"/>
</dbReference>
<dbReference type="SUPFAM" id="SSF52374">
    <property type="entry name" value="Nucleotidylyl transferase"/>
    <property type="match status" value="1"/>
</dbReference>
<dbReference type="PROSITE" id="PS00178">
    <property type="entry name" value="AA_TRNA_LIGASE_I"/>
    <property type="match status" value="1"/>
</dbReference>
<keyword id="KW-0030">Aminoacyl-tRNA synthetase</keyword>
<keyword id="KW-0067">ATP-binding</keyword>
<keyword id="KW-0963">Cytoplasm</keyword>
<keyword id="KW-0436">Ligase</keyword>
<keyword id="KW-0479">Metal-binding</keyword>
<keyword id="KW-0547">Nucleotide-binding</keyword>
<keyword id="KW-0648">Protein biosynthesis</keyword>
<keyword id="KW-0862">Zinc</keyword>
<protein>
    <recommendedName>
        <fullName evidence="1">Glutamate--tRNA ligase</fullName>
        <ecNumber evidence="1">6.1.1.17</ecNumber>
    </recommendedName>
    <alternativeName>
        <fullName evidence="1">Glutamyl-tRNA synthetase</fullName>
        <shortName evidence="1">GluRS</shortName>
    </alternativeName>
</protein>
<evidence type="ECO:0000255" key="1">
    <source>
        <dbReference type="HAMAP-Rule" id="MF_00022"/>
    </source>
</evidence>
<evidence type="ECO:0000305" key="2"/>
<accession>B5RCP1</accession>
<sequence length="471" mass="53732">MKIKTRFAPSPTGYLHVGGARTALYSWLFARHHGGEFVLRIEDTDLERSTPEAIEAIMDGMNWLNLEWDEGPYFQTKRFDRYNAVIDEMLEAGTAYKCYCSKERLEQLREEQMAKGEKPRYDGRCRHSYEHHADDEPCVVRFANPQDGSVIFDDQIRGPIEFSNQELDDLIIRRTDGSPTYNFCVVVDDWDMEITHVIRGEDHINNTPRQINILKALNAPVPMYAHVSMINGDDGKKLSKRHGAVSVMQYRDDGYLPEALLNYLVRLGWSSGDQEIFTREEMIKLFSLGAVSKSASAFNTDKLLWLNHHYINTLEPEYVATHLQWHIEQENIDTRNGPQLAELVKLLGERCKTLKEMAQSCRYFYEDFSEFDADAAKKHLRPVARQPLEVVRDKLSAITDWSAENVHHAIQATADELEVGMGKVGMPLRVAVTGAGQSPALDVTVHAIGKTRSIERINKALGFIAERESQQ</sequence>
<proteinExistence type="inferred from homology"/>
<gene>
    <name evidence="1" type="primary">gltX</name>
    <name type="ordered locus">SG2450</name>
</gene>
<organism>
    <name type="scientific">Salmonella gallinarum (strain 287/91 / NCTC 13346)</name>
    <dbReference type="NCBI Taxonomy" id="550538"/>
    <lineage>
        <taxon>Bacteria</taxon>
        <taxon>Pseudomonadati</taxon>
        <taxon>Pseudomonadota</taxon>
        <taxon>Gammaproteobacteria</taxon>
        <taxon>Enterobacterales</taxon>
        <taxon>Enterobacteriaceae</taxon>
        <taxon>Salmonella</taxon>
    </lineage>
</organism>
<comment type="function">
    <text evidence="1">Catalyzes the attachment of glutamate to tRNA(Glu) in a two-step reaction: glutamate is first activated by ATP to form Glu-AMP and then transferred to the acceptor end of tRNA(Glu).</text>
</comment>
<comment type="catalytic activity">
    <reaction evidence="1">
        <text>tRNA(Glu) + L-glutamate + ATP = L-glutamyl-tRNA(Glu) + AMP + diphosphate</text>
        <dbReference type="Rhea" id="RHEA:23540"/>
        <dbReference type="Rhea" id="RHEA-COMP:9663"/>
        <dbReference type="Rhea" id="RHEA-COMP:9680"/>
        <dbReference type="ChEBI" id="CHEBI:29985"/>
        <dbReference type="ChEBI" id="CHEBI:30616"/>
        <dbReference type="ChEBI" id="CHEBI:33019"/>
        <dbReference type="ChEBI" id="CHEBI:78442"/>
        <dbReference type="ChEBI" id="CHEBI:78520"/>
        <dbReference type="ChEBI" id="CHEBI:456215"/>
        <dbReference type="EC" id="6.1.1.17"/>
    </reaction>
</comment>
<comment type="cofactor">
    <cofactor evidence="1">
        <name>Zn(2+)</name>
        <dbReference type="ChEBI" id="CHEBI:29105"/>
    </cofactor>
    <text evidence="1">Binds 1 zinc ion per subunit.</text>
</comment>
<comment type="subunit">
    <text evidence="1">Monomer.</text>
</comment>
<comment type="subcellular location">
    <subcellularLocation>
        <location evidence="1">Cytoplasm</location>
    </subcellularLocation>
</comment>
<comment type="similarity">
    <text evidence="1">Belongs to the class-I aminoacyl-tRNA synthetase family. Glutamate--tRNA ligase type 1 subfamily.</text>
</comment>
<comment type="sequence caution" evidence="2">
    <conflict type="erroneous initiation">
        <sequence resource="EMBL-CDS" id="CAR38277"/>
    </conflict>
</comment>
<feature type="chain" id="PRO_0000367767" description="Glutamate--tRNA ligase">
    <location>
        <begin position="1"/>
        <end position="471"/>
    </location>
</feature>
<feature type="short sequence motif" description="'HIGH' region" evidence="1">
    <location>
        <begin position="9"/>
        <end position="19"/>
    </location>
</feature>
<feature type="short sequence motif" description="'KMSKS' region" evidence="1">
    <location>
        <begin position="237"/>
        <end position="241"/>
    </location>
</feature>
<feature type="binding site" evidence="1">
    <location>
        <position position="98"/>
    </location>
    <ligand>
        <name>Zn(2+)</name>
        <dbReference type="ChEBI" id="CHEBI:29105"/>
    </ligand>
</feature>
<feature type="binding site" evidence="1">
    <location>
        <position position="100"/>
    </location>
    <ligand>
        <name>Zn(2+)</name>
        <dbReference type="ChEBI" id="CHEBI:29105"/>
    </ligand>
</feature>
<feature type="binding site" evidence="1">
    <location>
        <position position="125"/>
    </location>
    <ligand>
        <name>Zn(2+)</name>
        <dbReference type="ChEBI" id="CHEBI:29105"/>
    </ligand>
</feature>
<feature type="binding site" evidence="1">
    <location>
        <position position="127"/>
    </location>
    <ligand>
        <name>Zn(2+)</name>
        <dbReference type="ChEBI" id="CHEBI:29105"/>
    </ligand>
</feature>
<feature type="binding site" evidence="1">
    <location>
        <position position="240"/>
    </location>
    <ligand>
        <name>ATP</name>
        <dbReference type="ChEBI" id="CHEBI:30616"/>
    </ligand>
</feature>